<comment type="function">
    <text evidence="1">Growth factor active in angiogenesis, lymphangiogenesis and endothelial cell growth, stimulating their proliferation and migration and also has effects on the permeability of blood vessels. May function in the formation of the venous and lymphatic vascular systems during embryogenesis, and also in the maintenance of differentiated lymphatic endothelium in adults. Binds and activates VEGFR-3 (Flt4) receptor (By similarity).</text>
</comment>
<comment type="subunit">
    <text evidence="1">Homodimer; non-covalent and antiparallel.</text>
</comment>
<comment type="subcellular location">
    <subcellularLocation>
        <location evidence="1">Secreted</location>
    </subcellularLocation>
</comment>
<comment type="tissue specificity">
    <text evidence="3">Highly expressed in the spleen, kidney, lung, tongue, ovary and mammary gland.</text>
</comment>
<comment type="PTM">
    <text evidence="1">Undergoes a complex proteolytic maturation which generates a variety of processed secreted forms with increased activity toward VEGFR-3 and VEGFR-2. VEGF-D first form an antiparallel homodimer linked by disulfide bonds before secretion. The fully processed VEGF-D is composed mostly of two VEGF homology domains (VHDs) bound by non-covalent interactions (By similarity).</text>
</comment>
<comment type="miscellaneous">
    <text>Indolinones; MAE87, MAE106 and MAZ51 inhibit VEGF-D induced activation of VEGFR-3.</text>
</comment>
<comment type="similarity">
    <text evidence="4">Belongs to the PDGF/VEGF growth factor family.</text>
</comment>
<gene>
    <name evidence="5" type="primary">Vegfd</name>
    <name type="synonym">Figf</name>
</gene>
<evidence type="ECO:0000250" key="1"/>
<evidence type="ECO:0000255" key="2"/>
<evidence type="ECO:0000269" key="3">
    <source>
    </source>
</evidence>
<evidence type="ECO:0000305" key="4"/>
<evidence type="ECO:0000312" key="5">
    <source>
        <dbReference type="RGD" id="620695"/>
    </source>
</evidence>
<name>VEGFD_RAT</name>
<reference key="1">
    <citation type="journal article" date="2001" name="Eur. J. Biochem.">
        <title>Characterization of indolinones which preferentially inhibit VEGF-C- and VEGF-D-induced activation of VEGFR-3 rather than VEGFR-2.</title>
        <authorList>
            <person name="Kirkin V."/>
            <person name="Mazitschek R."/>
            <person name="Krishnan J."/>
            <person name="Steffen A."/>
            <person name="Waltenberger J."/>
            <person name="Pepper M.S."/>
            <person name="Giannis A."/>
            <person name="Sleeman J.P."/>
        </authorList>
    </citation>
    <scope>NUCLEOTIDE SEQUENCE [MRNA]</scope>
    <scope>TISSUE SPECIFICITY</scope>
    <scope>MUTAGENESIS OF CYS-141</scope>
    <source>
        <strain>Sprague-Dawley</strain>
    </source>
</reference>
<reference key="2">
    <citation type="submission" date="1997-07" db="EMBL/GenBank/DDBJ databases">
        <authorList>
            <person name="Yamada Y."/>
            <person name="Hirata Y."/>
            <person name="Nezu J."/>
            <person name="Shimane M."/>
        </authorList>
    </citation>
    <scope>NUCLEOTIDE SEQUENCE [MRNA]</scope>
    <source>
        <strain>Sprague-Dawley</strain>
    </source>
</reference>
<proteinExistence type="evidence at protein level"/>
<organism>
    <name type="scientific">Rattus norvegicus</name>
    <name type="common">Rat</name>
    <dbReference type="NCBI Taxonomy" id="10116"/>
    <lineage>
        <taxon>Eukaryota</taxon>
        <taxon>Metazoa</taxon>
        <taxon>Chordata</taxon>
        <taxon>Craniata</taxon>
        <taxon>Vertebrata</taxon>
        <taxon>Euteleostomi</taxon>
        <taxon>Mammalia</taxon>
        <taxon>Eutheria</taxon>
        <taxon>Euarchontoglires</taxon>
        <taxon>Glires</taxon>
        <taxon>Rodentia</taxon>
        <taxon>Myomorpha</taxon>
        <taxon>Muroidea</taxon>
        <taxon>Muridae</taxon>
        <taxon>Murinae</taxon>
        <taxon>Rattus</taxon>
    </lineage>
</organism>
<feature type="signal peptide" evidence="2">
    <location>
        <begin position="1"/>
        <end position="21"/>
    </location>
</feature>
<feature type="propeptide" id="PRO_0000023414" evidence="2">
    <location>
        <begin position="22"/>
        <end position="93"/>
    </location>
</feature>
<feature type="chain" id="PRO_0000023415" description="Vascular endothelial growth factor D">
    <location>
        <begin position="94"/>
        <end position="210"/>
    </location>
</feature>
<feature type="propeptide" id="PRO_0000023416" evidence="2">
    <location>
        <begin position="211"/>
        <end position="326"/>
    </location>
</feature>
<feature type="repeat" description="1; approximate">
    <location>
        <begin position="227"/>
        <end position="242"/>
    </location>
</feature>
<feature type="repeat" description="2">
    <location>
        <begin position="263"/>
        <end position="278"/>
    </location>
</feature>
<feature type="repeat" description="3">
    <location>
        <begin position="282"/>
        <end position="298"/>
    </location>
</feature>
<feature type="repeat" description="4; truncated">
    <location>
        <begin position="306"/>
        <end position="317"/>
    </location>
</feature>
<feature type="region of interest" description="4 X 16 AA repeats of C-X(10)-C-X-C-X(1,3)-C">
    <location>
        <begin position="227"/>
        <end position="317"/>
    </location>
</feature>
<feature type="glycosylation site" description="N-linked (GlcNAc...) asparagine" evidence="2">
    <location>
        <position position="160"/>
    </location>
</feature>
<feature type="glycosylation site" description="N-linked (GlcNAc...) asparagine" evidence="2">
    <location>
        <position position="190"/>
    </location>
</feature>
<feature type="glycosylation site" description="N-linked (GlcNAc...) asparagine" evidence="2">
    <location>
        <position position="292"/>
    </location>
</feature>
<feature type="disulfide bond" evidence="1">
    <location>
        <begin position="116"/>
        <end position="158"/>
    </location>
</feature>
<feature type="disulfide bond" description="Interchain" evidence="1">
    <location>
        <position position="141"/>
    </location>
</feature>
<feature type="disulfide bond" evidence="1">
    <location>
        <begin position="147"/>
        <end position="194"/>
    </location>
</feature>
<feature type="disulfide bond" description="Interchain" evidence="1">
    <location>
        <position position="150"/>
    </location>
</feature>
<feature type="disulfide bond" evidence="1">
    <location>
        <begin position="151"/>
        <end position="196"/>
    </location>
</feature>
<feature type="mutagenesis site" description="Inhibits ability to activate VEGFR-2 and VEGFR-3." evidence="3">
    <original>C</original>
    <variation>S</variation>
    <location>
        <position position="141"/>
    </location>
</feature>
<feature type="sequence conflict" description="In Ref. 1; AAK96008." evidence="4" ref="1">
    <original>I</original>
    <variation>S</variation>
    <location>
        <position position="24"/>
    </location>
</feature>
<feature type="sequence conflict" description="In Ref. 1; AAK96008." evidence="4" ref="1">
    <original>L</original>
    <variation>F</variation>
    <location>
        <position position="34"/>
    </location>
</feature>
<feature type="sequence conflict" description="In Ref. 1; AAK96008." evidence="4" ref="1">
    <original>T</original>
    <variation>S</variation>
    <location>
        <position position="54"/>
    </location>
</feature>
<keyword id="KW-0037">Angiogenesis</keyword>
<keyword id="KW-0165">Cleavage on pair of basic residues</keyword>
<keyword id="KW-0217">Developmental protein</keyword>
<keyword id="KW-0221">Differentiation</keyword>
<keyword id="KW-1015">Disulfide bond</keyword>
<keyword id="KW-0325">Glycoprotein</keyword>
<keyword id="KW-0339">Growth factor</keyword>
<keyword id="KW-0497">Mitogen</keyword>
<keyword id="KW-1185">Reference proteome</keyword>
<keyword id="KW-0677">Repeat</keyword>
<keyword id="KW-0964">Secreted</keyword>
<keyword id="KW-0732">Signal</keyword>
<accession>O35251</accession>
<accession>Q91ZE4</accession>
<sequence>MYGEWAAVNILMMSYVYLVQGFSIEHRAVKDVSLERSSRSVLERSEQQIRAASTLEELLQVAHSEDWKLWRCRLKLKSLANVDSRSTSHRSTRFAATFYDTETLKVIDEEWQRTQCSPRETCVEVASELGKTTNTFFKPPCVNVFRCGGCCNEESVMCMNTSTSYISKQLFEISVPLTSVPELVPVKIANHTGCKCLPTGPRHPYSIIRRSIQIPEEDQCPHSKKLCPVDMLWDNTKCKCVLQDENPLPGTEDHSYLQEPALCGPHMMFDEDRCECVCKAPCPGDLIQHPENCSCFECKESLESCCQKHKMFHPDTCRSMVFSLSP</sequence>
<dbReference type="EMBL" id="AY032728">
    <property type="protein sequence ID" value="AAK96008.1"/>
    <property type="molecule type" value="mRNA"/>
</dbReference>
<dbReference type="EMBL" id="AF014827">
    <property type="protein sequence ID" value="AAB66557.1"/>
    <property type="molecule type" value="mRNA"/>
</dbReference>
<dbReference type="RefSeq" id="NP_113949.1">
    <property type="nucleotide sequence ID" value="NM_031761.1"/>
</dbReference>
<dbReference type="SMR" id="O35251"/>
<dbReference type="FunCoup" id="O35251">
    <property type="interactions" value="516"/>
</dbReference>
<dbReference type="STRING" id="10116.ENSRNOP00000058883"/>
<dbReference type="GlyCosmos" id="O35251">
    <property type="glycosylation" value="3 sites, No reported glycans"/>
</dbReference>
<dbReference type="GlyGen" id="O35251">
    <property type="glycosylation" value="3 sites"/>
</dbReference>
<dbReference type="PhosphoSitePlus" id="O35251"/>
<dbReference type="PaxDb" id="10116-ENSRNOP00000058883"/>
<dbReference type="GeneID" id="360457"/>
<dbReference type="KEGG" id="rno:360457"/>
<dbReference type="UCSC" id="RGD:620695">
    <property type="organism name" value="rat"/>
</dbReference>
<dbReference type="AGR" id="RGD:620695"/>
<dbReference type="CTD" id="2277"/>
<dbReference type="RGD" id="620695">
    <property type="gene designation" value="Vegfd"/>
</dbReference>
<dbReference type="eggNOG" id="ENOG502QVIH">
    <property type="taxonomic scope" value="Eukaryota"/>
</dbReference>
<dbReference type="InParanoid" id="O35251"/>
<dbReference type="OrthoDB" id="198735at2759"/>
<dbReference type="Reactome" id="R-RNO-114608">
    <property type="pathway name" value="Platelet degranulation"/>
</dbReference>
<dbReference type="Reactome" id="R-RNO-194313">
    <property type="pathway name" value="VEGF ligand-receptor interactions"/>
</dbReference>
<dbReference type="Reactome" id="R-RNO-195399">
    <property type="pathway name" value="VEGF binds to VEGFR leading to receptor dimerization"/>
</dbReference>
<dbReference type="PRO" id="PR:O35251"/>
<dbReference type="Proteomes" id="UP000002494">
    <property type="component" value="Unplaced"/>
</dbReference>
<dbReference type="GO" id="GO:0005576">
    <property type="term" value="C:extracellular region"/>
    <property type="evidence" value="ECO:0000266"/>
    <property type="project" value="RGD"/>
</dbReference>
<dbReference type="GO" id="GO:0005615">
    <property type="term" value="C:extracellular space"/>
    <property type="evidence" value="ECO:0000266"/>
    <property type="project" value="RGD"/>
</dbReference>
<dbReference type="GO" id="GO:0016020">
    <property type="term" value="C:membrane"/>
    <property type="evidence" value="ECO:0007669"/>
    <property type="project" value="InterPro"/>
</dbReference>
<dbReference type="GO" id="GO:0042056">
    <property type="term" value="F:chemoattractant activity"/>
    <property type="evidence" value="ECO:0000266"/>
    <property type="project" value="RGD"/>
</dbReference>
<dbReference type="GO" id="GO:0008083">
    <property type="term" value="F:growth factor activity"/>
    <property type="evidence" value="ECO:0000266"/>
    <property type="project" value="RGD"/>
</dbReference>
<dbReference type="GO" id="GO:0042802">
    <property type="term" value="F:identical protein binding"/>
    <property type="evidence" value="ECO:0000266"/>
    <property type="project" value="RGD"/>
</dbReference>
<dbReference type="GO" id="GO:0043185">
    <property type="term" value="F:vascular endothelial growth factor receptor 3 binding"/>
    <property type="evidence" value="ECO:0000266"/>
    <property type="project" value="RGD"/>
</dbReference>
<dbReference type="GO" id="GO:0005172">
    <property type="term" value="F:vascular endothelial growth factor receptor binding"/>
    <property type="evidence" value="ECO:0000315"/>
    <property type="project" value="RGD"/>
</dbReference>
<dbReference type="GO" id="GO:0071542">
    <property type="term" value="P:dopaminergic neuron differentiation"/>
    <property type="evidence" value="ECO:0000266"/>
    <property type="project" value="RGD"/>
</dbReference>
<dbReference type="GO" id="GO:0048144">
    <property type="term" value="P:fibroblast proliferation"/>
    <property type="evidence" value="ECO:0000266"/>
    <property type="project" value="RGD"/>
</dbReference>
<dbReference type="GO" id="GO:0050930">
    <property type="term" value="P:induction of positive chemotaxis"/>
    <property type="evidence" value="ECO:0000266"/>
    <property type="project" value="RGD"/>
</dbReference>
<dbReference type="GO" id="GO:0045766">
    <property type="term" value="P:positive regulation of angiogenesis"/>
    <property type="evidence" value="ECO:0000304"/>
    <property type="project" value="RGD"/>
</dbReference>
<dbReference type="GO" id="GO:0051781">
    <property type="term" value="P:positive regulation of cell division"/>
    <property type="evidence" value="ECO:0007669"/>
    <property type="project" value="UniProtKB-KW"/>
</dbReference>
<dbReference type="GO" id="GO:0008284">
    <property type="term" value="P:positive regulation of cell population proliferation"/>
    <property type="evidence" value="ECO:0000266"/>
    <property type="project" value="RGD"/>
</dbReference>
<dbReference type="GO" id="GO:0032755">
    <property type="term" value="P:positive regulation of interleukin-6 production"/>
    <property type="evidence" value="ECO:0000315"/>
    <property type="project" value="RGD"/>
</dbReference>
<dbReference type="GO" id="GO:0060754">
    <property type="term" value="P:positive regulation of mast cell chemotaxis"/>
    <property type="evidence" value="ECO:0000266"/>
    <property type="project" value="RGD"/>
</dbReference>
<dbReference type="GO" id="GO:0030947">
    <property type="term" value="P:regulation of vascular endothelial growth factor receptor signaling pathway"/>
    <property type="evidence" value="ECO:0000315"/>
    <property type="project" value="RGD"/>
</dbReference>
<dbReference type="GO" id="GO:0009617">
    <property type="term" value="P:response to bacterium"/>
    <property type="evidence" value="ECO:0000266"/>
    <property type="project" value="RGD"/>
</dbReference>
<dbReference type="GO" id="GO:0001666">
    <property type="term" value="P:response to hypoxia"/>
    <property type="evidence" value="ECO:0000270"/>
    <property type="project" value="RGD"/>
</dbReference>
<dbReference type="GO" id="GO:0070555">
    <property type="term" value="P:response to interleukin-1"/>
    <property type="evidence" value="ECO:0000270"/>
    <property type="project" value="RGD"/>
</dbReference>
<dbReference type="GO" id="GO:0002040">
    <property type="term" value="P:sprouting angiogenesis"/>
    <property type="evidence" value="ECO:0000318"/>
    <property type="project" value="GO_Central"/>
</dbReference>
<dbReference type="GO" id="GO:0048010">
    <property type="term" value="P:vascular endothelial growth factor receptor signaling pathway"/>
    <property type="evidence" value="ECO:0000315"/>
    <property type="project" value="RGD"/>
</dbReference>
<dbReference type="GO" id="GO:0038084">
    <property type="term" value="P:vascular endothelial growth factor signaling pathway"/>
    <property type="evidence" value="ECO:0000318"/>
    <property type="project" value="GO_Central"/>
</dbReference>
<dbReference type="CDD" id="cd00135">
    <property type="entry name" value="PDGF"/>
    <property type="match status" value="1"/>
</dbReference>
<dbReference type="FunFam" id="2.10.90.10:FF:000021">
    <property type="entry name" value="vascular endothelial growth factor D"/>
    <property type="match status" value="1"/>
</dbReference>
<dbReference type="Gene3D" id="2.10.90.10">
    <property type="entry name" value="Cystine-knot cytokines"/>
    <property type="match status" value="1"/>
</dbReference>
<dbReference type="InterPro" id="IPR004153">
    <property type="entry name" value="CXCXC_repeat"/>
</dbReference>
<dbReference type="InterPro" id="IPR029034">
    <property type="entry name" value="Cystine-knot_cytokine"/>
</dbReference>
<dbReference type="InterPro" id="IPR023581">
    <property type="entry name" value="PD_growth_factor_CS"/>
</dbReference>
<dbReference type="InterPro" id="IPR000072">
    <property type="entry name" value="PDGF/VEGF_dom"/>
</dbReference>
<dbReference type="InterPro" id="IPR050507">
    <property type="entry name" value="PDGF/VEGF_growth_factor"/>
</dbReference>
<dbReference type="PANTHER" id="PTHR12025">
    <property type="entry name" value="VASCULAR ENDOTHELIAL GROWTH FACTOR"/>
    <property type="match status" value="1"/>
</dbReference>
<dbReference type="PANTHER" id="PTHR12025:SF11">
    <property type="entry name" value="VASCULAR ENDOTHELIAL GROWTH FACTOR D"/>
    <property type="match status" value="1"/>
</dbReference>
<dbReference type="Pfam" id="PF03128">
    <property type="entry name" value="CXCXC"/>
    <property type="match status" value="1"/>
</dbReference>
<dbReference type="Pfam" id="PF00341">
    <property type="entry name" value="PDGF"/>
    <property type="match status" value="1"/>
</dbReference>
<dbReference type="SMART" id="SM00141">
    <property type="entry name" value="PDGF"/>
    <property type="match status" value="1"/>
</dbReference>
<dbReference type="SUPFAM" id="SSF57501">
    <property type="entry name" value="Cystine-knot cytokines"/>
    <property type="match status" value="1"/>
</dbReference>
<dbReference type="PROSITE" id="PS00249">
    <property type="entry name" value="PDGF_1"/>
    <property type="match status" value="1"/>
</dbReference>
<dbReference type="PROSITE" id="PS50278">
    <property type="entry name" value="PDGF_2"/>
    <property type="match status" value="1"/>
</dbReference>
<protein>
    <recommendedName>
        <fullName evidence="5">Vascular endothelial growth factor D</fullName>
        <shortName>VEGF-D</shortName>
    </recommendedName>
    <alternativeName>
        <fullName>c-Fos-induced growth factor</fullName>
        <shortName>FIGF</shortName>
    </alternativeName>
</protein>